<accession>P50209</accession>
<dbReference type="EMBL" id="U20941">
    <property type="protein sequence ID" value="AAA86505.1"/>
    <property type="molecule type" value="mRNA"/>
</dbReference>
<dbReference type="SMR" id="P50209"/>
<dbReference type="GO" id="GO:0005634">
    <property type="term" value="C:nucleus"/>
    <property type="evidence" value="ECO:0007669"/>
    <property type="project" value="UniProtKB-SubCell"/>
</dbReference>
<dbReference type="GO" id="GO:0000981">
    <property type="term" value="F:DNA-binding transcription factor activity, RNA polymerase II-specific"/>
    <property type="evidence" value="ECO:0007669"/>
    <property type="project" value="InterPro"/>
</dbReference>
<dbReference type="GO" id="GO:0000978">
    <property type="term" value="F:RNA polymerase II cis-regulatory region sequence-specific DNA binding"/>
    <property type="evidence" value="ECO:0007669"/>
    <property type="project" value="TreeGrafter"/>
</dbReference>
<dbReference type="GO" id="GO:0009952">
    <property type="term" value="P:anterior/posterior pattern specification"/>
    <property type="evidence" value="ECO:0007669"/>
    <property type="project" value="TreeGrafter"/>
</dbReference>
<dbReference type="GO" id="GO:0048704">
    <property type="term" value="P:embryonic skeletal system morphogenesis"/>
    <property type="evidence" value="ECO:0007669"/>
    <property type="project" value="TreeGrafter"/>
</dbReference>
<dbReference type="GO" id="GO:0009954">
    <property type="term" value="P:proximal/distal pattern formation"/>
    <property type="evidence" value="ECO:0007669"/>
    <property type="project" value="TreeGrafter"/>
</dbReference>
<dbReference type="CDD" id="cd00086">
    <property type="entry name" value="homeodomain"/>
    <property type="match status" value="1"/>
</dbReference>
<dbReference type="FunFam" id="1.10.10.60:FF:000018">
    <property type="entry name" value="Homeobox A10"/>
    <property type="match status" value="1"/>
</dbReference>
<dbReference type="Gene3D" id="1.10.10.60">
    <property type="entry name" value="Homeodomain-like"/>
    <property type="match status" value="1"/>
</dbReference>
<dbReference type="InterPro" id="IPR050803">
    <property type="entry name" value="Abd-B_homeobox_TF"/>
</dbReference>
<dbReference type="InterPro" id="IPR001356">
    <property type="entry name" value="HD"/>
</dbReference>
<dbReference type="InterPro" id="IPR020479">
    <property type="entry name" value="HD_metazoa"/>
</dbReference>
<dbReference type="InterPro" id="IPR017970">
    <property type="entry name" value="Homeobox_CS"/>
</dbReference>
<dbReference type="InterPro" id="IPR009057">
    <property type="entry name" value="Homeodomain-like_sf"/>
</dbReference>
<dbReference type="PANTHER" id="PTHR45970">
    <property type="entry name" value="AGAP004664-PA"/>
    <property type="match status" value="1"/>
</dbReference>
<dbReference type="PANTHER" id="PTHR45970:SF3">
    <property type="entry name" value="HOMEOBOX PROTEIN HOX-A9"/>
    <property type="match status" value="1"/>
</dbReference>
<dbReference type="Pfam" id="PF00046">
    <property type="entry name" value="Homeodomain"/>
    <property type="match status" value="1"/>
</dbReference>
<dbReference type="PRINTS" id="PR00024">
    <property type="entry name" value="HOMEOBOX"/>
</dbReference>
<dbReference type="SMART" id="SM00389">
    <property type="entry name" value="HOX"/>
    <property type="match status" value="1"/>
</dbReference>
<dbReference type="SUPFAM" id="SSF46689">
    <property type="entry name" value="Homeodomain-like"/>
    <property type="match status" value="1"/>
</dbReference>
<dbReference type="PROSITE" id="PS00027">
    <property type="entry name" value="HOMEOBOX_1"/>
    <property type="match status" value="1"/>
</dbReference>
<dbReference type="PROSITE" id="PS50071">
    <property type="entry name" value="HOMEOBOX_2"/>
    <property type="match status" value="1"/>
</dbReference>
<sequence length="143" mass="16592">RHYGIKPEPLPPGTRRGDCTTFDSSHTLSLSDYGSSPADKQSSEGAFPEAPAETEASGDKPAIDPNNPAANWLHARSTRKKRCPYTKHQTLELEKEFLFNMYLTRDRRYEVARLLNLTERQVKIWFQNRRMKMKKINKDRPKE</sequence>
<evidence type="ECO:0000250" key="1"/>
<evidence type="ECO:0000255" key="2">
    <source>
        <dbReference type="PROSITE-ProRule" id="PRU00108"/>
    </source>
</evidence>
<evidence type="ECO:0000256" key="3">
    <source>
        <dbReference type="SAM" id="MobiDB-lite"/>
    </source>
</evidence>
<evidence type="ECO:0000305" key="4"/>
<organism>
    <name type="scientific">Ambystoma mexicanum</name>
    <name type="common">Axolotl</name>
    <dbReference type="NCBI Taxonomy" id="8296"/>
    <lineage>
        <taxon>Eukaryota</taxon>
        <taxon>Metazoa</taxon>
        <taxon>Chordata</taxon>
        <taxon>Craniata</taxon>
        <taxon>Vertebrata</taxon>
        <taxon>Euteleostomi</taxon>
        <taxon>Amphibia</taxon>
        <taxon>Batrachia</taxon>
        <taxon>Caudata</taxon>
        <taxon>Salamandroidea</taxon>
        <taxon>Ambystomatidae</taxon>
        <taxon>Ambystoma</taxon>
    </lineage>
</organism>
<feature type="chain" id="PRO_0000200089" description="Homeobox protein Hox-A9">
    <location>
        <begin position="1" status="less than"/>
        <end position="143"/>
    </location>
</feature>
<feature type="DNA-binding region" description="Homeobox" evidence="2">
    <location>
        <begin position="78"/>
        <end position="137"/>
    </location>
</feature>
<feature type="region of interest" description="Disordered" evidence="3">
    <location>
        <begin position="1"/>
        <end position="75"/>
    </location>
</feature>
<feature type="compositionally biased region" description="Polar residues" evidence="3">
    <location>
        <begin position="21"/>
        <end position="44"/>
    </location>
</feature>
<feature type="non-terminal residue">
    <location>
        <position position="1"/>
    </location>
</feature>
<reference key="1">
    <citation type="journal article" date="1995" name="Development">
        <title>Regulation of HoxA expression in developing and regenerating axolotl limbs.</title>
        <authorList>
            <person name="Gardiner D.M."/>
            <person name="Blumberg B."/>
            <person name="Komine Y."/>
            <person name="Bryant S.V."/>
        </authorList>
    </citation>
    <scope>NUCLEOTIDE SEQUENCE [MRNA]</scope>
    <source>
        <tissue>Regenerating limb blastema</tissue>
    </source>
</reference>
<name>HXA9_AMBME</name>
<gene>
    <name type="primary">HOXA9</name>
</gene>
<keyword id="KW-0217">Developmental protein</keyword>
<keyword id="KW-0238">DNA-binding</keyword>
<keyword id="KW-0371">Homeobox</keyword>
<keyword id="KW-0539">Nucleus</keyword>
<keyword id="KW-0804">Transcription</keyword>
<keyword id="KW-0805">Transcription regulation</keyword>
<protein>
    <recommendedName>
        <fullName>Homeobox protein Hox-A9</fullName>
    </recommendedName>
</protein>
<proteinExistence type="evidence at transcript level"/>
<comment type="function">
    <text evidence="1">Sequence-specific transcription factor which is part of a developmental regulatory system that provides cells with specific positional identities on the anterior-posterior axis.</text>
</comment>
<comment type="subcellular location">
    <subcellularLocation>
        <location>Nucleus</location>
    </subcellularLocation>
</comment>
<comment type="similarity">
    <text evidence="4">Belongs to the Abd-B homeobox family.</text>
</comment>